<dbReference type="EMBL" id="CP001120">
    <property type="protein sequence ID" value="ACF67077.1"/>
    <property type="molecule type" value="Genomic_DNA"/>
</dbReference>
<dbReference type="RefSeq" id="WP_000234826.1">
    <property type="nucleotide sequence ID" value="NC_011083.1"/>
</dbReference>
<dbReference type="SMR" id="B4TKD5"/>
<dbReference type="KEGG" id="seh:SeHA_C2003"/>
<dbReference type="HOGENOM" id="CLU_017584_9_4_6"/>
<dbReference type="Proteomes" id="UP000001866">
    <property type="component" value="Chromosome"/>
</dbReference>
<dbReference type="GO" id="GO:0005737">
    <property type="term" value="C:cytoplasm"/>
    <property type="evidence" value="ECO:0007669"/>
    <property type="project" value="UniProtKB-SubCell"/>
</dbReference>
<dbReference type="GO" id="GO:0003677">
    <property type="term" value="F:DNA binding"/>
    <property type="evidence" value="ECO:0007669"/>
    <property type="project" value="UniProtKB-KW"/>
</dbReference>
<dbReference type="GO" id="GO:0003700">
    <property type="term" value="F:DNA-binding transcription factor activity"/>
    <property type="evidence" value="ECO:0007669"/>
    <property type="project" value="UniProtKB-UniRule"/>
</dbReference>
<dbReference type="GO" id="GO:0000062">
    <property type="term" value="F:fatty-acyl-CoA binding"/>
    <property type="evidence" value="ECO:0007669"/>
    <property type="project" value="InterPro"/>
</dbReference>
<dbReference type="GO" id="GO:0006631">
    <property type="term" value="P:fatty acid metabolic process"/>
    <property type="evidence" value="ECO:0007669"/>
    <property type="project" value="UniProtKB-KW"/>
</dbReference>
<dbReference type="GO" id="GO:0019217">
    <property type="term" value="P:regulation of fatty acid metabolic process"/>
    <property type="evidence" value="ECO:0007669"/>
    <property type="project" value="UniProtKB-UniRule"/>
</dbReference>
<dbReference type="CDD" id="cd07377">
    <property type="entry name" value="WHTH_GntR"/>
    <property type="match status" value="1"/>
</dbReference>
<dbReference type="FunFam" id="1.10.10.10:FF:000036">
    <property type="entry name" value="Fatty acid metabolism regulator protein"/>
    <property type="match status" value="1"/>
</dbReference>
<dbReference type="FunFam" id="1.20.120.530:FF:000003">
    <property type="entry name" value="Fatty acid metabolism regulator protein"/>
    <property type="match status" value="1"/>
</dbReference>
<dbReference type="Gene3D" id="1.20.120.530">
    <property type="entry name" value="GntR ligand-binding domain-like"/>
    <property type="match status" value="1"/>
</dbReference>
<dbReference type="Gene3D" id="1.10.10.10">
    <property type="entry name" value="Winged helix-like DNA-binding domain superfamily/Winged helix DNA-binding domain"/>
    <property type="match status" value="1"/>
</dbReference>
<dbReference type="HAMAP" id="MF_00696">
    <property type="entry name" value="HTH_FadR"/>
    <property type="match status" value="1"/>
</dbReference>
<dbReference type="InterPro" id="IPR014178">
    <property type="entry name" value="FA-response_TF_FadR"/>
</dbReference>
<dbReference type="InterPro" id="IPR028374">
    <property type="entry name" value="FadR_C"/>
</dbReference>
<dbReference type="InterPro" id="IPR008920">
    <property type="entry name" value="TF_FadR/GntR_C"/>
</dbReference>
<dbReference type="InterPro" id="IPR000524">
    <property type="entry name" value="Tscrpt_reg_HTH_GntR"/>
</dbReference>
<dbReference type="InterPro" id="IPR036388">
    <property type="entry name" value="WH-like_DNA-bd_sf"/>
</dbReference>
<dbReference type="InterPro" id="IPR036390">
    <property type="entry name" value="WH_DNA-bd_sf"/>
</dbReference>
<dbReference type="NCBIfam" id="TIGR02812">
    <property type="entry name" value="fadR_gamma"/>
    <property type="match status" value="1"/>
</dbReference>
<dbReference type="NCBIfam" id="NF003444">
    <property type="entry name" value="PRK04984.1"/>
    <property type="match status" value="1"/>
</dbReference>
<dbReference type="PANTHER" id="PTHR43537:SF52">
    <property type="entry name" value="FATTY ACID METABOLISM REGULATOR PROTEIN"/>
    <property type="match status" value="1"/>
</dbReference>
<dbReference type="PANTHER" id="PTHR43537">
    <property type="entry name" value="TRANSCRIPTIONAL REGULATOR, GNTR FAMILY"/>
    <property type="match status" value="1"/>
</dbReference>
<dbReference type="Pfam" id="PF07840">
    <property type="entry name" value="FadR_C"/>
    <property type="match status" value="1"/>
</dbReference>
<dbReference type="Pfam" id="PF00392">
    <property type="entry name" value="GntR"/>
    <property type="match status" value="1"/>
</dbReference>
<dbReference type="PRINTS" id="PR00035">
    <property type="entry name" value="HTHGNTR"/>
</dbReference>
<dbReference type="SMART" id="SM00345">
    <property type="entry name" value="HTH_GNTR"/>
    <property type="match status" value="1"/>
</dbReference>
<dbReference type="SUPFAM" id="SSF48008">
    <property type="entry name" value="GntR ligand-binding domain-like"/>
    <property type="match status" value="1"/>
</dbReference>
<dbReference type="SUPFAM" id="SSF46785">
    <property type="entry name" value="Winged helix' DNA-binding domain"/>
    <property type="match status" value="1"/>
</dbReference>
<dbReference type="PROSITE" id="PS50949">
    <property type="entry name" value="HTH_GNTR"/>
    <property type="match status" value="1"/>
</dbReference>
<name>FADR_SALHS</name>
<accession>B4TKD5</accession>
<protein>
    <recommendedName>
        <fullName evidence="1">Fatty acid metabolism regulator protein</fullName>
    </recommendedName>
</protein>
<proteinExistence type="inferred from homology"/>
<evidence type="ECO:0000255" key="1">
    <source>
        <dbReference type="HAMAP-Rule" id="MF_00696"/>
    </source>
</evidence>
<gene>
    <name evidence="1" type="primary">fadR</name>
    <name type="ordered locus">SeHA_C2003</name>
</gene>
<keyword id="KW-0010">Activator</keyword>
<keyword id="KW-0963">Cytoplasm</keyword>
<keyword id="KW-0238">DNA-binding</keyword>
<keyword id="KW-0276">Fatty acid metabolism</keyword>
<keyword id="KW-0443">Lipid metabolism</keyword>
<keyword id="KW-0678">Repressor</keyword>
<keyword id="KW-0804">Transcription</keyword>
<keyword id="KW-0805">Transcription regulation</keyword>
<comment type="function">
    <text evidence="1">Multifunctional regulator of fatty acid metabolism.</text>
</comment>
<comment type="subunit">
    <text evidence="1">Homodimer.</text>
</comment>
<comment type="subcellular location">
    <subcellularLocation>
        <location evidence="1">Cytoplasm</location>
    </subcellularLocation>
</comment>
<sequence length="239" mass="26987">MVIKAQSPAGFAEEYIIESIWNNRFPPGTILPAERELSELIGVTRTTLREVLQRLARDGWLTIQHGKPTKVNNFWETSGLNILETLARLDHESVPQLIDNLLSVRTNISTIFIRTALRQHPDKAQEVLATAHEVADHADAFADLDYNIFRGLAFASGNPIYGLILNGMKGLYTRIGRHYFANPEARSLALGFYHKLSSLCEQGAHDQVYETVRRYGHDSGEIWHRMQKNLPGDLAIQGR</sequence>
<reference key="1">
    <citation type="journal article" date="2011" name="J. Bacteriol.">
        <title>Comparative genomics of 28 Salmonella enterica isolates: evidence for CRISPR-mediated adaptive sublineage evolution.</title>
        <authorList>
            <person name="Fricke W.F."/>
            <person name="Mammel M.K."/>
            <person name="McDermott P.F."/>
            <person name="Tartera C."/>
            <person name="White D.G."/>
            <person name="Leclerc J.E."/>
            <person name="Ravel J."/>
            <person name="Cebula T.A."/>
        </authorList>
    </citation>
    <scope>NUCLEOTIDE SEQUENCE [LARGE SCALE GENOMIC DNA]</scope>
    <source>
        <strain>SL476</strain>
    </source>
</reference>
<feature type="chain" id="PRO_1000132328" description="Fatty acid metabolism regulator protein">
    <location>
        <begin position="1"/>
        <end position="239"/>
    </location>
</feature>
<feature type="domain" description="HTH gntR-type" evidence="1">
    <location>
        <begin position="6"/>
        <end position="74"/>
    </location>
</feature>
<feature type="DNA-binding region" description="H-T-H motif" evidence="1">
    <location>
        <begin position="34"/>
        <end position="53"/>
    </location>
</feature>
<organism>
    <name type="scientific">Salmonella heidelberg (strain SL476)</name>
    <dbReference type="NCBI Taxonomy" id="454169"/>
    <lineage>
        <taxon>Bacteria</taxon>
        <taxon>Pseudomonadati</taxon>
        <taxon>Pseudomonadota</taxon>
        <taxon>Gammaproteobacteria</taxon>
        <taxon>Enterobacterales</taxon>
        <taxon>Enterobacteriaceae</taxon>
        <taxon>Salmonella</taxon>
    </lineage>
</organism>